<organism>
    <name type="scientific">Yersinia pseudotuberculosis serotype O:3 (strain YPIII)</name>
    <dbReference type="NCBI Taxonomy" id="502800"/>
    <lineage>
        <taxon>Bacteria</taxon>
        <taxon>Pseudomonadati</taxon>
        <taxon>Pseudomonadota</taxon>
        <taxon>Gammaproteobacteria</taxon>
        <taxon>Enterobacterales</taxon>
        <taxon>Yersiniaceae</taxon>
        <taxon>Yersinia</taxon>
    </lineage>
</organism>
<dbReference type="EC" id="2.9.1.1" evidence="1"/>
<dbReference type="EMBL" id="CP000950">
    <property type="protein sequence ID" value="ACA66356.1"/>
    <property type="molecule type" value="Genomic_DNA"/>
</dbReference>
<dbReference type="RefSeq" id="WP_002209608.1">
    <property type="nucleotide sequence ID" value="NZ_CP009792.1"/>
</dbReference>
<dbReference type="SMR" id="B1JH26"/>
<dbReference type="GeneID" id="57974660"/>
<dbReference type="KEGG" id="ypy:YPK_0042"/>
<dbReference type="PATRIC" id="fig|502800.11.peg.643"/>
<dbReference type="UniPathway" id="UPA00906">
    <property type="reaction ID" value="UER00896"/>
</dbReference>
<dbReference type="GO" id="GO:0005737">
    <property type="term" value="C:cytoplasm"/>
    <property type="evidence" value="ECO:0007669"/>
    <property type="project" value="UniProtKB-SubCell"/>
</dbReference>
<dbReference type="GO" id="GO:0004125">
    <property type="term" value="F:L-seryl-tRNA(Sec) selenium transferase activity"/>
    <property type="evidence" value="ECO:0007669"/>
    <property type="project" value="UniProtKB-UniRule"/>
</dbReference>
<dbReference type="GO" id="GO:0001717">
    <property type="term" value="P:conversion of seryl-tRNAsec to selenocys-tRNAsec"/>
    <property type="evidence" value="ECO:0007669"/>
    <property type="project" value="UniProtKB-UniRule"/>
</dbReference>
<dbReference type="GO" id="GO:0001514">
    <property type="term" value="P:selenocysteine incorporation"/>
    <property type="evidence" value="ECO:0007669"/>
    <property type="project" value="UniProtKB-UniRule"/>
</dbReference>
<dbReference type="FunFam" id="3.40.640.10:FF:000028">
    <property type="entry name" value="L-seryl-tRNA(Sec) selenium transferase"/>
    <property type="match status" value="1"/>
</dbReference>
<dbReference type="Gene3D" id="3.90.1150.180">
    <property type="match status" value="1"/>
</dbReference>
<dbReference type="Gene3D" id="3.40.640.10">
    <property type="entry name" value="Type I PLP-dependent aspartate aminotransferase-like (Major domain)"/>
    <property type="match status" value="1"/>
</dbReference>
<dbReference type="HAMAP" id="MF_00423">
    <property type="entry name" value="SelA"/>
    <property type="match status" value="1"/>
</dbReference>
<dbReference type="InterPro" id="IPR015424">
    <property type="entry name" value="PyrdxlP-dep_Trfase"/>
</dbReference>
<dbReference type="InterPro" id="IPR015421">
    <property type="entry name" value="PyrdxlP-dep_Trfase_major"/>
</dbReference>
<dbReference type="InterPro" id="IPR018319">
    <property type="entry name" value="SelA-like"/>
</dbReference>
<dbReference type="InterPro" id="IPR004534">
    <property type="entry name" value="SelA_trans"/>
</dbReference>
<dbReference type="InterPro" id="IPR025862">
    <property type="entry name" value="SelA_trans_N_dom"/>
</dbReference>
<dbReference type="NCBIfam" id="TIGR00474">
    <property type="entry name" value="selA"/>
    <property type="match status" value="1"/>
</dbReference>
<dbReference type="PANTHER" id="PTHR32328">
    <property type="entry name" value="L-SERYL-TRNA(SEC) SELENIUM TRANSFERASE"/>
    <property type="match status" value="1"/>
</dbReference>
<dbReference type="PANTHER" id="PTHR32328:SF0">
    <property type="entry name" value="L-SERYL-TRNA(SEC) SELENIUM TRANSFERASE"/>
    <property type="match status" value="1"/>
</dbReference>
<dbReference type="Pfam" id="PF12390">
    <property type="entry name" value="Se-cys_synth_N"/>
    <property type="match status" value="1"/>
</dbReference>
<dbReference type="Pfam" id="PF03841">
    <property type="entry name" value="SelA"/>
    <property type="match status" value="1"/>
</dbReference>
<dbReference type="SUPFAM" id="SSF53383">
    <property type="entry name" value="PLP-dependent transferases"/>
    <property type="match status" value="1"/>
</dbReference>
<proteinExistence type="inferred from homology"/>
<comment type="function">
    <text evidence="1">Converts seryl-tRNA(Sec) to selenocysteinyl-tRNA(Sec) required for selenoprotein biosynthesis.</text>
</comment>
<comment type="catalytic activity">
    <reaction evidence="1">
        <text>L-seryl-tRNA(Sec) + selenophosphate + H(+) = L-selenocysteinyl-tRNA(Sec) + phosphate</text>
        <dbReference type="Rhea" id="RHEA:22728"/>
        <dbReference type="Rhea" id="RHEA-COMP:9742"/>
        <dbReference type="Rhea" id="RHEA-COMP:9743"/>
        <dbReference type="ChEBI" id="CHEBI:15378"/>
        <dbReference type="ChEBI" id="CHEBI:16144"/>
        <dbReference type="ChEBI" id="CHEBI:43474"/>
        <dbReference type="ChEBI" id="CHEBI:78533"/>
        <dbReference type="ChEBI" id="CHEBI:78573"/>
        <dbReference type="EC" id="2.9.1.1"/>
    </reaction>
</comment>
<comment type="cofactor">
    <cofactor evidence="1">
        <name>pyridoxal 5'-phosphate</name>
        <dbReference type="ChEBI" id="CHEBI:597326"/>
    </cofactor>
</comment>
<comment type="pathway">
    <text evidence="1">Aminoacyl-tRNA biosynthesis; selenocysteinyl-tRNA(Sec) biosynthesis; selenocysteinyl-tRNA(Sec) from L-seryl-tRNA(Sec) (bacterial route): step 1/1.</text>
</comment>
<comment type="subunit">
    <text evidence="1">Homodecamer; pentamer of dimers. Binds only one seryl-tRNA(Sec) per dimer.</text>
</comment>
<comment type="subcellular location">
    <subcellularLocation>
        <location evidence="1">Cytoplasm</location>
    </subcellularLocation>
</comment>
<comment type="similarity">
    <text evidence="1">Belongs to the SelA family.</text>
</comment>
<name>SELA_YERPY</name>
<accession>B1JH26</accession>
<protein>
    <recommendedName>
        <fullName evidence="1">L-seryl-tRNA(Sec) selenium transferase</fullName>
        <ecNumber evidence="1">2.9.1.1</ecNumber>
    </recommendedName>
    <alternativeName>
        <fullName evidence="1">Selenocysteine synthase</fullName>
        <shortName evidence="1">Sec synthase</shortName>
    </alternativeName>
    <alternativeName>
        <fullName evidence="1">Selenocysteinyl-tRNA(Sec) synthase</fullName>
    </alternativeName>
</protein>
<keyword id="KW-0963">Cytoplasm</keyword>
<keyword id="KW-0648">Protein biosynthesis</keyword>
<keyword id="KW-0663">Pyridoxal phosphate</keyword>
<keyword id="KW-0711">Selenium</keyword>
<keyword id="KW-0808">Transferase</keyword>
<sequence>MSAEPHPLYRQLPAIDRLLNEPEMAPLLAEYGPVLLADTLRQLQAEAREYIGQFHTLADWCADWPAALRQRLNQRQPALKPVFNLTGTVLHTNLGRAPLAESAIAAVTDAMRSAVTLEYSLEGAGRGHRDRAVADLLCALTGAEDACIVNNNAAAVFLLLTVMAAGKQVVVSRGELVEIGGAFRIPDVMRQAGCELVEVGTTNRTHLKDYRQAINENTGLLMKVHTSNYSIEGFTAAVSEQQLAALGQECSIPTATDLGSGSLVDMTRYGLPAEPMPQQLIAAGVDLVTFSGDKLLGGPQAGIILGKKQWIERLQQHPLKRALRADKMTLAALDATLRLYQQPDRLVEQLPSLRLLTRPASEIAACAQRLLAPLIACYGTDFTLDIESCWSQIGSGSLPVDRLPSWALTFTPKDGRGSTLEALTARWRTLTKPVIGRVADGRLWLDLRCLEDEAALLRELAS</sequence>
<evidence type="ECO:0000255" key="1">
    <source>
        <dbReference type="HAMAP-Rule" id="MF_00423"/>
    </source>
</evidence>
<reference key="1">
    <citation type="submission" date="2008-02" db="EMBL/GenBank/DDBJ databases">
        <title>Complete sequence of Yersinia pseudotuberculosis YPIII.</title>
        <authorList>
            <consortium name="US DOE Joint Genome Institute"/>
            <person name="Copeland A."/>
            <person name="Lucas S."/>
            <person name="Lapidus A."/>
            <person name="Glavina del Rio T."/>
            <person name="Dalin E."/>
            <person name="Tice H."/>
            <person name="Bruce D."/>
            <person name="Goodwin L."/>
            <person name="Pitluck S."/>
            <person name="Munk A.C."/>
            <person name="Brettin T."/>
            <person name="Detter J.C."/>
            <person name="Han C."/>
            <person name="Tapia R."/>
            <person name="Schmutz J."/>
            <person name="Larimer F."/>
            <person name="Land M."/>
            <person name="Hauser L."/>
            <person name="Challacombe J.F."/>
            <person name="Green L."/>
            <person name="Lindler L.E."/>
            <person name="Nikolich M.P."/>
            <person name="Richardson P."/>
        </authorList>
    </citation>
    <scope>NUCLEOTIDE SEQUENCE [LARGE SCALE GENOMIC DNA]</scope>
    <source>
        <strain>YPIII</strain>
    </source>
</reference>
<feature type="chain" id="PRO_1000124161" description="L-seryl-tRNA(Sec) selenium transferase">
    <location>
        <begin position="1"/>
        <end position="462"/>
    </location>
</feature>
<feature type="modified residue" description="N6-(pyridoxal phosphate)lysine" evidence="1">
    <location>
        <position position="294"/>
    </location>
</feature>
<gene>
    <name evidence="1" type="primary">selA</name>
    <name type="ordered locus">YPK_0042</name>
</gene>